<name>MNTH_BURCM</name>
<protein>
    <recommendedName>
        <fullName evidence="1">Divalent metal cation transporter MntH</fullName>
    </recommendedName>
</protein>
<feature type="chain" id="PRO_0000325601" description="Divalent metal cation transporter MntH">
    <location>
        <begin position="1"/>
        <end position="441"/>
    </location>
</feature>
<feature type="transmembrane region" description="Helical" evidence="1">
    <location>
        <begin position="41"/>
        <end position="61"/>
    </location>
</feature>
<feature type="transmembrane region" description="Helical" evidence="1">
    <location>
        <begin position="74"/>
        <end position="94"/>
    </location>
</feature>
<feature type="transmembrane region" description="Helical" evidence="1">
    <location>
        <begin position="116"/>
        <end position="136"/>
    </location>
</feature>
<feature type="transmembrane region" description="Helical" evidence="1">
    <location>
        <begin position="141"/>
        <end position="161"/>
    </location>
</feature>
<feature type="transmembrane region" description="Helical" evidence="1">
    <location>
        <begin position="183"/>
        <end position="203"/>
    </location>
</feature>
<feature type="transmembrane region" description="Helical" evidence="1">
    <location>
        <begin position="223"/>
        <end position="243"/>
    </location>
</feature>
<feature type="transmembrane region" description="Helical" evidence="1">
    <location>
        <begin position="271"/>
        <end position="291"/>
    </location>
</feature>
<feature type="transmembrane region" description="Helical" evidence="1">
    <location>
        <begin position="311"/>
        <end position="331"/>
    </location>
</feature>
<feature type="transmembrane region" description="Helical" evidence="1">
    <location>
        <begin position="360"/>
        <end position="380"/>
    </location>
</feature>
<feature type="transmembrane region" description="Helical" evidence="1">
    <location>
        <begin position="381"/>
        <end position="401"/>
    </location>
</feature>
<feature type="transmembrane region" description="Helical" evidence="1">
    <location>
        <begin position="419"/>
        <end position="439"/>
    </location>
</feature>
<reference key="1">
    <citation type="submission" date="2006-08" db="EMBL/GenBank/DDBJ databases">
        <title>Complete sequence of chromosome 2 of Burkholderia cepacia AMMD.</title>
        <authorList>
            <person name="Copeland A."/>
            <person name="Lucas S."/>
            <person name="Lapidus A."/>
            <person name="Barry K."/>
            <person name="Detter J.C."/>
            <person name="Glavina del Rio T."/>
            <person name="Hammon N."/>
            <person name="Israni S."/>
            <person name="Pitluck S."/>
            <person name="Bruce D."/>
            <person name="Chain P."/>
            <person name="Malfatti S."/>
            <person name="Shin M."/>
            <person name="Vergez L."/>
            <person name="Schmutz J."/>
            <person name="Larimer F."/>
            <person name="Land M."/>
            <person name="Hauser L."/>
            <person name="Kyrpides N."/>
            <person name="Kim E."/>
            <person name="Parke J."/>
            <person name="Coenye T."/>
            <person name="Konstantinidis K."/>
            <person name="Ramette A."/>
            <person name="Tiedje J."/>
            <person name="Richardson P."/>
        </authorList>
    </citation>
    <scope>NUCLEOTIDE SEQUENCE [LARGE SCALE GENOMIC DNA]</scope>
    <source>
        <strain>ATCC BAA-244 / DSM 16087 / CCUG 44356 / LMG 19182 / AMMD</strain>
    </source>
</reference>
<organism>
    <name type="scientific">Burkholderia ambifaria (strain ATCC BAA-244 / DSM 16087 / CCUG 44356 / LMG 19182 / AMMD)</name>
    <name type="common">Burkholderia cepacia (strain AMMD)</name>
    <dbReference type="NCBI Taxonomy" id="339670"/>
    <lineage>
        <taxon>Bacteria</taxon>
        <taxon>Pseudomonadati</taxon>
        <taxon>Pseudomonadota</taxon>
        <taxon>Betaproteobacteria</taxon>
        <taxon>Burkholderiales</taxon>
        <taxon>Burkholderiaceae</taxon>
        <taxon>Burkholderia</taxon>
        <taxon>Burkholderia cepacia complex</taxon>
    </lineage>
</organism>
<gene>
    <name evidence="1" type="primary">mntH</name>
    <name type="ordered locus">Bamb_4013</name>
</gene>
<sequence>MIPVTSKSSSGFALPDLSTDRAHRAVPAEGAARAALEGRRTGIAALLPFVGPAVIASIGYMDPGNFATNIQAGAAYGYRLLWVVLAANAIAMLFQAMSAKLGIVTGRNLAELCREHFPAPIVWGMWIASEIAAMATDLAEFLGGALAFALLCHLPLFAGMIATALATCAILALEKRGFRPLEAAIAALVGVIGACYLGELMIAPQDWHAAAFHLVVPQIPDRAALTIAVGIIGATIMPHTLYLHSGLTQDRIAPRDDTERRRLMRFSNREVVVALGLAGFVNLAMVMMAASAFHASAPGMADIGDAYHTLIPVLGPAAGVLFLVALLTSGVSSSVVGTMAGQVVMQGFMRRRLSVWMRRAVTIAPAFAVVACGCDVTRAMVASQVVLSFVLPMPMIALLILSARNDVMGRYAMRMPLRIVAGTATVVIVGLNAYLVWAAFN</sequence>
<dbReference type="EMBL" id="CP000441">
    <property type="protein sequence ID" value="ABI89566.1"/>
    <property type="molecule type" value="Genomic_DNA"/>
</dbReference>
<dbReference type="RefSeq" id="WP_011659012.1">
    <property type="nucleotide sequence ID" value="NC_008391.1"/>
</dbReference>
<dbReference type="SMR" id="Q0B8F7"/>
<dbReference type="GeneID" id="93086988"/>
<dbReference type="KEGG" id="bam:Bamb_4013"/>
<dbReference type="PATRIC" id="fig|339670.21.peg.4293"/>
<dbReference type="eggNOG" id="COG1914">
    <property type="taxonomic scope" value="Bacteria"/>
</dbReference>
<dbReference type="Proteomes" id="UP000000662">
    <property type="component" value="Chromosome 2"/>
</dbReference>
<dbReference type="GO" id="GO:0005886">
    <property type="term" value="C:plasma membrane"/>
    <property type="evidence" value="ECO:0007669"/>
    <property type="project" value="UniProtKB-SubCell"/>
</dbReference>
<dbReference type="GO" id="GO:0015086">
    <property type="term" value="F:cadmium ion transmembrane transporter activity"/>
    <property type="evidence" value="ECO:0007669"/>
    <property type="project" value="TreeGrafter"/>
</dbReference>
<dbReference type="GO" id="GO:0005384">
    <property type="term" value="F:manganese ion transmembrane transporter activity"/>
    <property type="evidence" value="ECO:0007669"/>
    <property type="project" value="TreeGrafter"/>
</dbReference>
<dbReference type="GO" id="GO:0046872">
    <property type="term" value="F:metal ion binding"/>
    <property type="evidence" value="ECO:0007669"/>
    <property type="project" value="UniProtKB-UniRule"/>
</dbReference>
<dbReference type="GO" id="GO:0015293">
    <property type="term" value="F:symporter activity"/>
    <property type="evidence" value="ECO:0007669"/>
    <property type="project" value="UniProtKB-UniRule"/>
</dbReference>
<dbReference type="GO" id="GO:0034755">
    <property type="term" value="P:iron ion transmembrane transport"/>
    <property type="evidence" value="ECO:0007669"/>
    <property type="project" value="TreeGrafter"/>
</dbReference>
<dbReference type="HAMAP" id="MF_00221">
    <property type="entry name" value="NRAMP"/>
    <property type="match status" value="1"/>
</dbReference>
<dbReference type="InterPro" id="IPR001046">
    <property type="entry name" value="NRAMP_fam"/>
</dbReference>
<dbReference type="NCBIfam" id="TIGR01197">
    <property type="entry name" value="nramp"/>
    <property type="match status" value="1"/>
</dbReference>
<dbReference type="NCBIfam" id="NF037982">
    <property type="entry name" value="Nramp_1"/>
    <property type="match status" value="1"/>
</dbReference>
<dbReference type="NCBIfam" id="NF001923">
    <property type="entry name" value="PRK00701.1"/>
    <property type="match status" value="1"/>
</dbReference>
<dbReference type="PANTHER" id="PTHR11706:SF33">
    <property type="entry name" value="NATURAL RESISTANCE-ASSOCIATED MACROPHAGE PROTEIN 2"/>
    <property type="match status" value="1"/>
</dbReference>
<dbReference type="PANTHER" id="PTHR11706">
    <property type="entry name" value="SOLUTE CARRIER PROTEIN FAMILY 11 MEMBER"/>
    <property type="match status" value="1"/>
</dbReference>
<dbReference type="Pfam" id="PF01566">
    <property type="entry name" value="Nramp"/>
    <property type="match status" value="1"/>
</dbReference>
<dbReference type="PRINTS" id="PR00447">
    <property type="entry name" value="NATRESASSCMP"/>
</dbReference>
<keyword id="KW-0997">Cell inner membrane</keyword>
<keyword id="KW-1003">Cell membrane</keyword>
<keyword id="KW-0406">Ion transport</keyword>
<keyword id="KW-0472">Membrane</keyword>
<keyword id="KW-0769">Symport</keyword>
<keyword id="KW-0812">Transmembrane</keyword>
<keyword id="KW-1133">Transmembrane helix</keyword>
<keyword id="KW-0813">Transport</keyword>
<proteinExistence type="inferred from homology"/>
<accession>Q0B8F7</accession>
<comment type="function">
    <text evidence="1">H(+)-stimulated, divalent metal cation uptake system.</text>
</comment>
<comment type="subcellular location">
    <subcellularLocation>
        <location evidence="1">Cell inner membrane</location>
        <topology evidence="1">Multi-pass membrane protein</topology>
    </subcellularLocation>
</comment>
<comment type="similarity">
    <text evidence="1">Belongs to the NRAMP family.</text>
</comment>
<evidence type="ECO:0000255" key="1">
    <source>
        <dbReference type="HAMAP-Rule" id="MF_00221"/>
    </source>
</evidence>